<keyword id="KW-0496">Mitochondrion</keyword>
<protein>
    <recommendedName>
        <fullName>Uncharacterized mitochondrial protein ORF11</fullName>
    </recommendedName>
</protein>
<comment type="subcellular location">
    <subcellularLocation>
        <location evidence="1">Mitochondrion</location>
    </subcellularLocation>
</comment>
<evidence type="ECO:0000305" key="1"/>
<organism>
    <name type="scientific">Paramecium tetraurelia</name>
    <dbReference type="NCBI Taxonomy" id="5888"/>
    <lineage>
        <taxon>Eukaryota</taxon>
        <taxon>Sar</taxon>
        <taxon>Alveolata</taxon>
        <taxon>Ciliophora</taxon>
        <taxon>Intramacronucleata</taxon>
        <taxon>Oligohymenophorea</taxon>
        <taxon>Peniculida</taxon>
        <taxon>Parameciidae</taxon>
        <taxon>Paramecium</taxon>
    </lineage>
</organism>
<sequence length="367" mass="43758">MSTDFVFTPNFSTGFSCLKSDVVIHIAQWQYWWWFWFTYLWSLYFFFISRSIRARTFKMRPKIYTSFRSHGKWGDFLACIVPVIWCFNILVNSNFILRLMEWQNESTIFTSCIRARQWYWIYKFELKNILDLLTVPKKVGWNKWLIHTGNSIEVADDYFYALRIRAQNSWTSKYWKTFVRSLKKFKVSNNIHFIDDVVTAKKFKASVLSFMPYNQFDDKTLGFNLAKTNDSTVLLENDIFCDNFLFKGGDSWLCESIVFNHFGKKKIGGKKSDTLFNALNKTMFLNRKFFKNFLYDIDALVSNAFLEKKPKYVNLTTKRTDYGDFSRFTKKRVFEKRPILITKAFFPLNMEAFDNEILNVSFDATVT</sequence>
<accession>P15612</accession>
<geneLocation type="mitochondrion"/>
<reference key="1">
    <citation type="journal article" date="1990" name="Nucleic Acids Res.">
        <title>Nucleotide sequence of the mitochondrial genome of Paramecium.</title>
        <authorList>
            <person name="Pritchard A.E."/>
            <person name="Seilhamer J.J."/>
            <person name="Mahalingam R."/>
            <person name="Sable C.L."/>
            <person name="Venuti S.E."/>
            <person name="Cummings D.J."/>
        </authorList>
    </citation>
    <scope>NUCLEOTIDE SEQUENCE [GENOMIC DNA]</scope>
    <source>
        <strain>Stock 51</strain>
    </source>
</reference>
<feature type="chain" id="PRO_0000196872" description="Uncharacterized mitochondrial protein ORF11">
    <location>
        <begin position="1"/>
        <end position="367"/>
    </location>
</feature>
<name>YM11_PARTE</name>
<dbReference type="EMBL" id="X15917">
    <property type="protein sequence ID" value="CAA34054.1"/>
    <property type="molecule type" value="Genomic_DNA"/>
</dbReference>
<dbReference type="PIR" id="S07745">
    <property type="entry name" value="S07745"/>
</dbReference>
<dbReference type="SMR" id="P15612"/>
<dbReference type="GO" id="GO:0005739">
    <property type="term" value="C:mitochondrion"/>
    <property type="evidence" value="ECO:0007669"/>
    <property type="project" value="UniProtKB-SubCell"/>
</dbReference>
<proteinExistence type="predicted"/>